<accession>Q80V86</accession>
<accession>A2API4</accession>
<accession>Q3TEM3</accession>
<accession>Q3TNW0</accession>
<accession>Q6PFD3</accession>
<accession>Q810I3</accession>
<accession>Q8BQJ8</accession>
<accession>Q8BT91</accession>
<feature type="chain" id="PRO_0000259554" description="Integrator complex subunit 8">
    <location>
        <begin position="1"/>
        <end position="995"/>
    </location>
</feature>
<feature type="repeat" description="TPR 1">
    <location>
        <begin position="250"/>
        <end position="288"/>
    </location>
</feature>
<feature type="repeat" description="TPR 2">
    <location>
        <begin position="320"/>
        <end position="356"/>
    </location>
</feature>
<feature type="repeat" description="TPR 3">
    <location>
        <begin position="570"/>
        <end position="603"/>
    </location>
</feature>
<feature type="repeat" description="TPR 4">
    <location>
        <begin position="833"/>
        <end position="866"/>
    </location>
</feature>
<feature type="short sequence motif" description="WFEF motif" evidence="1">
    <location>
        <begin position="24"/>
        <end position="29"/>
    </location>
</feature>
<feature type="modified residue" description="Phosphothreonine" evidence="2">
    <location>
        <position position="18"/>
    </location>
</feature>
<feature type="sequence conflict" description="In Ref. 1; BAC33786." evidence="4" ref="1">
    <original>K</original>
    <variation>R</variation>
    <location>
        <position position="40"/>
    </location>
</feature>
<feature type="sequence conflict" description="In Ref. 1; BAC25374." evidence="4" ref="1">
    <original>K</original>
    <variation>Q</variation>
    <location>
        <position position="60"/>
    </location>
</feature>
<feature type="sequence conflict" description="In Ref. 3; AAH50192." evidence="4" ref="3">
    <original>F</original>
    <variation>L</variation>
    <location>
        <position position="442"/>
    </location>
</feature>
<feature type="sequence conflict" description="In Ref. 1; BAE41225." evidence="4" ref="1">
    <original>V</original>
    <variation>M</variation>
    <location>
        <position position="600"/>
    </location>
</feature>
<organism>
    <name type="scientific">Mus musculus</name>
    <name type="common">Mouse</name>
    <dbReference type="NCBI Taxonomy" id="10090"/>
    <lineage>
        <taxon>Eukaryota</taxon>
        <taxon>Metazoa</taxon>
        <taxon>Chordata</taxon>
        <taxon>Craniata</taxon>
        <taxon>Vertebrata</taxon>
        <taxon>Euteleostomi</taxon>
        <taxon>Mammalia</taxon>
        <taxon>Eutheria</taxon>
        <taxon>Euarchontoglires</taxon>
        <taxon>Glires</taxon>
        <taxon>Rodentia</taxon>
        <taxon>Myomorpha</taxon>
        <taxon>Muroidea</taxon>
        <taxon>Muridae</taxon>
        <taxon>Murinae</taxon>
        <taxon>Mus</taxon>
        <taxon>Mus</taxon>
    </lineage>
</organism>
<sequence>MSAEAADREAATSSRPCTPPQTCWFEFLLEESLLEKHLRKACPDPAPVQLIVQFLEQASKPSVNEQNQVQPPPDNKRNRVLKLLALKVAAHLKWDLDILEKSLSVPVLNMLLNELLCISKVPPGTKHVDMDLSALPPTTAMAILLYNRWAIRTIVQSSFPVKQAKPGPPQLNVMNQMQQEKELTENILKVLKEQAADCILVLEAALRLNKDLYVHTMRTLDLLAVEPGTVNGETENSTAGLKIRTEEMQCQVCYDLGAAYFQQGSTDSAIYENAREKFFRTKELLAEIGSLSLHCTIDEKRLAGYCQACDVLVPSSDNNSQQLTPYSQVHICLRSGSYQEVVQIFIEDNLTFTLPVQFRQSVLRELFQKAQQGNEALDEICFKICVCNTVRDVLEGRTISVQFNQLFLRPNKEKIDFLLEVCSRSINVEKASDSLKGNMAAFLKNVCLGLEDLQYVFMISSHELFITLLKDEERKLLVDQMRKRSPRVNLCIKPVTSFYDIPASASVNIGQLEHQLILSVDPWRIRQILIELHGMTSERQFWTVSNKWEVPSVYSSVILGIKDNLTRDLVYILMAKGLHCSTVKDFPHSKQLFTACLELVTEFSPKLRQVMLNEMLLLDIRTHEAGVGQSGERPPSDLISRVRGYLEMRLPDIPLRQVVAEECVAFMLNWRENEYLTLQVPAFLFQNNPYVKLGQLLAATCKELPGPKESRRTAKDLWEVVVQICSVSNQHKRGNDGRVSLIKQRESTLGIMYRSELLSFIKKLREPLVLTIILSLFVKLHNVREDIVNDITAEHISIWPSSIPNLQSVDFEAVAITVKELVRYTLSINPNNHAWLIIQADIYFATNQHSAALHYYLQAGAVCSDFFNKAVPPDVYTDQVIKRMIKCCSLLNCHTQVAILCQFLREIDYKTAFKSLQEQNSHDAMDSYYDYIWDVTILEYLTYLHHKRGETDKRQIAIKAIGQTELNASNPEEVLQLAAQRRKKKFLQAMAKLYF</sequence>
<name>INT8_MOUSE</name>
<evidence type="ECO:0000250" key="1">
    <source>
        <dbReference type="UniProtKB" id="A1ZAK1"/>
    </source>
</evidence>
<evidence type="ECO:0000250" key="2">
    <source>
        <dbReference type="UniProtKB" id="Q75QN2"/>
    </source>
</evidence>
<evidence type="ECO:0000269" key="3">
    <source>
    </source>
</evidence>
<evidence type="ECO:0000305" key="4"/>
<protein>
    <recommendedName>
        <fullName>Integrator complex subunit 8</fullName>
        <shortName>Int8</shortName>
    </recommendedName>
</protein>
<proteinExistence type="evidence at protein level"/>
<dbReference type="EMBL" id="AK049513">
    <property type="protein sequence ID" value="BAC33786.1"/>
    <property type="molecule type" value="mRNA"/>
</dbReference>
<dbReference type="EMBL" id="AK012736">
    <property type="protein sequence ID" value="BAC25374.2"/>
    <property type="status" value="ALT_FRAME"/>
    <property type="molecule type" value="mRNA"/>
</dbReference>
<dbReference type="EMBL" id="AK140829">
    <property type="protein sequence ID" value="BAE24491.1"/>
    <property type="molecule type" value="mRNA"/>
</dbReference>
<dbReference type="EMBL" id="AK164951">
    <property type="protein sequence ID" value="BAE37977.1"/>
    <property type="molecule type" value="mRNA"/>
</dbReference>
<dbReference type="EMBL" id="AK169552">
    <property type="protein sequence ID" value="BAE41225.1"/>
    <property type="molecule type" value="mRNA"/>
</dbReference>
<dbReference type="EMBL" id="AL840625">
    <property type="status" value="NOT_ANNOTATED_CDS"/>
    <property type="molecule type" value="Genomic_DNA"/>
</dbReference>
<dbReference type="EMBL" id="BC049092">
    <property type="protein sequence ID" value="AAH49092.1"/>
    <property type="molecule type" value="mRNA"/>
</dbReference>
<dbReference type="EMBL" id="BC050192">
    <property type="protein sequence ID" value="AAH50192.1"/>
    <property type="status" value="ALT_INIT"/>
    <property type="molecule type" value="mRNA"/>
</dbReference>
<dbReference type="EMBL" id="BC057618">
    <property type="protein sequence ID" value="AAH57618.1"/>
    <property type="status" value="ALT_INIT"/>
    <property type="molecule type" value="mRNA"/>
</dbReference>
<dbReference type="CCDS" id="CCDS17967.1"/>
<dbReference type="RefSeq" id="NP_001153067.1">
    <property type="nucleotide sequence ID" value="NM_001159595.1"/>
</dbReference>
<dbReference type="RefSeq" id="NP_835213.3">
    <property type="nucleotide sequence ID" value="NM_178112.5"/>
</dbReference>
<dbReference type="SMR" id="Q80V86"/>
<dbReference type="BioGRID" id="215494">
    <property type="interactions" value="1"/>
</dbReference>
<dbReference type="FunCoup" id="Q80V86">
    <property type="interactions" value="3771"/>
</dbReference>
<dbReference type="IntAct" id="Q80V86">
    <property type="interactions" value="1"/>
</dbReference>
<dbReference type="STRING" id="10090.ENSMUSP00000038418"/>
<dbReference type="GlyGen" id="Q80V86">
    <property type="glycosylation" value="1 site, 1 N-linked glycan (1 site)"/>
</dbReference>
<dbReference type="iPTMnet" id="Q80V86"/>
<dbReference type="PhosphoSitePlus" id="Q80V86"/>
<dbReference type="jPOST" id="Q80V86"/>
<dbReference type="PaxDb" id="10090-ENSMUSP00000038418"/>
<dbReference type="PeptideAtlas" id="Q80V86"/>
<dbReference type="ProteomicsDB" id="266996"/>
<dbReference type="Pumba" id="Q80V86"/>
<dbReference type="Antibodypedia" id="25892">
    <property type="antibodies" value="45 antibodies from 18 providers"/>
</dbReference>
<dbReference type="Ensembl" id="ENSMUST00000044616.10">
    <property type="protein sequence ID" value="ENSMUSP00000038418.4"/>
    <property type="gene ID" value="ENSMUSG00000040738.12"/>
</dbReference>
<dbReference type="Ensembl" id="ENSMUST00000108319.9">
    <property type="protein sequence ID" value="ENSMUSP00000103955.3"/>
    <property type="gene ID" value="ENSMUSG00000040738.12"/>
</dbReference>
<dbReference type="GeneID" id="72656"/>
<dbReference type="KEGG" id="mmu:72656"/>
<dbReference type="UCSC" id="uc008rzg.2">
    <property type="organism name" value="mouse"/>
</dbReference>
<dbReference type="AGR" id="MGI:1919906"/>
<dbReference type="CTD" id="55656"/>
<dbReference type="MGI" id="MGI:1919906">
    <property type="gene designation" value="Ints8"/>
</dbReference>
<dbReference type="VEuPathDB" id="HostDB:ENSMUSG00000040738"/>
<dbReference type="eggNOG" id="ENOG502QQS8">
    <property type="taxonomic scope" value="Eukaryota"/>
</dbReference>
<dbReference type="GeneTree" id="ENSGT00390000007597"/>
<dbReference type="HOGENOM" id="CLU_012129_0_0_1"/>
<dbReference type="InParanoid" id="Q80V86"/>
<dbReference type="OMA" id="ASLSDWM"/>
<dbReference type="OrthoDB" id="64340at2759"/>
<dbReference type="PhylomeDB" id="Q80V86"/>
<dbReference type="TreeFam" id="TF324241"/>
<dbReference type="Reactome" id="R-MMU-6807505">
    <property type="pathway name" value="RNA polymerase II transcribes snRNA genes"/>
</dbReference>
<dbReference type="BioGRID-ORCS" id="72656">
    <property type="hits" value="19 hits in 80 CRISPR screens"/>
</dbReference>
<dbReference type="ChiTaRS" id="Ints8">
    <property type="organism name" value="mouse"/>
</dbReference>
<dbReference type="PRO" id="PR:Q80V86"/>
<dbReference type="Proteomes" id="UP000000589">
    <property type="component" value="Chromosome 4"/>
</dbReference>
<dbReference type="RNAct" id="Q80V86">
    <property type="molecule type" value="protein"/>
</dbReference>
<dbReference type="Bgee" id="ENSMUSG00000040738">
    <property type="expression patterns" value="Expressed in embryonic post-anal tail and 261 other cell types or tissues"/>
</dbReference>
<dbReference type="ExpressionAtlas" id="Q80V86">
    <property type="expression patterns" value="baseline and differential"/>
</dbReference>
<dbReference type="GO" id="GO:0000785">
    <property type="term" value="C:chromatin"/>
    <property type="evidence" value="ECO:0000250"/>
    <property type="project" value="UniProtKB"/>
</dbReference>
<dbReference type="GO" id="GO:0160232">
    <property type="term" value="C:INTAC complex"/>
    <property type="evidence" value="ECO:0000250"/>
    <property type="project" value="UniProtKB"/>
</dbReference>
<dbReference type="GO" id="GO:0032039">
    <property type="term" value="C:integrator complex"/>
    <property type="evidence" value="ECO:0000250"/>
    <property type="project" value="HGNC-UCL"/>
</dbReference>
<dbReference type="GO" id="GO:0005634">
    <property type="term" value="C:nucleus"/>
    <property type="evidence" value="ECO:0000250"/>
    <property type="project" value="UniProtKB"/>
</dbReference>
<dbReference type="GO" id="GO:0071168">
    <property type="term" value="P:protein localization to chromatin"/>
    <property type="evidence" value="ECO:0000250"/>
    <property type="project" value="UniProtKB"/>
</dbReference>
<dbReference type="GO" id="GO:0160240">
    <property type="term" value="P:RNA polymerase II transcription initiation surveillance"/>
    <property type="evidence" value="ECO:0000250"/>
    <property type="project" value="UniProtKB"/>
</dbReference>
<dbReference type="GO" id="GO:0034472">
    <property type="term" value="P:snRNA 3'-end processing"/>
    <property type="evidence" value="ECO:0007669"/>
    <property type="project" value="InterPro"/>
</dbReference>
<dbReference type="GO" id="GO:0016180">
    <property type="term" value="P:snRNA processing"/>
    <property type="evidence" value="ECO:0000250"/>
    <property type="project" value="HGNC-UCL"/>
</dbReference>
<dbReference type="InterPro" id="IPR038751">
    <property type="entry name" value="Int8"/>
</dbReference>
<dbReference type="PANTHER" id="PTHR13350">
    <property type="entry name" value="INTEGRATOR COMPLEX SUBUNIT 8"/>
    <property type="match status" value="1"/>
</dbReference>
<dbReference type="PANTHER" id="PTHR13350:SF1">
    <property type="entry name" value="INTEGRATOR COMPLEX SUBUNIT 8"/>
    <property type="match status" value="1"/>
</dbReference>
<keyword id="KW-0158">Chromosome</keyword>
<keyword id="KW-0539">Nucleus</keyword>
<keyword id="KW-0597">Phosphoprotein</keyword>
<keyword id="KW-1185">Reference proteome</keyword>
<keyword id="KW-0677">Repeat</keyword>
<keyword id="KW-0802">TPR repeat</keyword>
<gene>
    <name type="primary">Ints8</name>
</gene>
<comment type="function">
    <text evidence="2">Component of the integrator complex, a multiprotein complex that terminates RNA polymerase II (Pol II) transcription in the promoter-proximal region of genes. The integrator complex provides a quality checkpoint during transcription elongation by driving premature transcription termination of transcripts that are unfavorably configured for transcriptional elongation: the complex terminates transcription by (1) catalyzing dephosphorylation of the C-terminal domain (CTD) of Pol II subunit POLR2A/RPB1 and SUPT5H/SPT5, (2) degrading the exiting nascent RNA transcript via endonuclease activity and (3) promoting the release of Pol II from bound DNA. The integrator complex is also involved in terminating the synthesis of non-coding Pol II transcripts, such as enhancer RNAs (eRNAs), small nuclear RNAs (snRNAs), telomerase RNAs and long non-coding RNAs (lncRNAs). Within the integrator complex, INTS8 is required for the recruitment of protein phosphatase 2A (PP2A) to transcription pause-release checkpoint.</text>
</comment>
<comment type="subunit">
    <text evidence="2">Component of the Integrator complex, composed of core subunits INTS1, INTS2, INTS3, INTS4, INTS5, INTS6, INTS7, INTS8, INTS9/RC74, INTS10, INTS11/CPSF3L, INTS12, INTS13, INTS14 and INTS15. The core complex associates with protein phosphatase 2A subunits PPP2CA and PPP2R1A, to form the Integrator-PP2A (INTAC) complex.</text>
</comment>
<comment type="subcellular location">
    <subcellularLocation>
        <location evidence="2">Nucleus</location>
    </subcellularLocation>
    <subcellularLocation>
        <location evidence="2">Chromosome</location>
    </subcellularLocation>
    <text evidence="2">Associates with chromatin and transcription pause-release checkpoint.</text>
</comment>
<comment type="developmental stage">
    <text evidence="3">Highly expressed in the brain at 14.5 dpc especially in the cortex ventricular zone and hindbrain.</text>
</comment>
<comment type="domain">
    <text evidence="2">The WFEF motif is required for the recruitment of protein phosphatase 2A (PP2A) to transcription pause-release checkpoint.</text>
</comment>
<comment type="similarity">
    <text evidence="4">Belongs to the Integrator subunit 8 family.</text>
</comment>
<comment type="sequence caution" evidence="4">
    <conflict type="erroneous initiation">
        <sequence resource="EMBL-CDS" id="AAH50192"/>
    </conflict>
    <text>Truncated N-terminus.</text>
</comment>
<comment type="sequence caution" evidence="4">
    <conflict type="erroneous initiation">
        <sequence resource="EMBL-CDS" id="AAH57618"/>
    </conflict>
    <text>Truncated N-terminus.</text>
</comment>
<comment type="sequence caution" evidence="4">
    <conflict type="frameshift">
        <sequence resource="EMBL-CDS" id="BAC25374"/>
    </conflict>
</comment>
<reference key="1">
    <citation type="journal article" date="2005" name="Science">
        <title>The transcriptional landscape of the mammalian genome.</title>
        <authorList>
            <person name="Carninci P."/>
            <person name="Kasukawa T."/>
            <person name="Katayama S."/>
            <person name="Gough J."/>
            <person name="Frith M.C."/>
            <person name="Maeda N."/>
            <person name="Oyama R."/>
            <person name="Ravasi T."/>
            <person name="Lenhard B."/>
            <person name="Wells C."/>
            <person name="Kodzius R."/>
            <person name="Shimokawa K."/>
            <person name="Bajic V.B."/>
            <person name="Brenner S.E."/>
            <person name="Batalov S."/>
            <person name="Forrest A.R."/>
            <person name="Zavolan M."/>
            <person name="Davis M.J."/>
            <person name="Wilming L.G."/>
            <person name="Aidinis V."/>
            <person name="Allen J.E."/>
            <person name="Ambesi-Impiombato A."/>
            <person name="Apweiler R."/>
            <person name="Aturaliya R.N."/>
            <person name="Bailey T.L."/>
            <person name="Bansal M."/>
            <person name="Baxter L."/>
            <person name="Beisel K.W."/>
            <person name="Bersano T."/>
            <person name="Bono H."/>
            <person name="Chalk A.M."/>
            <person name="Chiu K.P."/>
            <person name="Choudhary V."/>
            <person name="Christoffels A."/>
            <person name="Clutterbuck D.R."/>
            <person name="Crowe M.L."/>
            <person name="Dalla E."/>
            <person name="Dalrymple B.P."/>
            <person name="de Bono B."/>
            <person name="Della Gatta G."/>
            <person name="di Bernardo D."/>
            <person name="Down T."/>
            <person name="Engstrom P."/>
            <person name="Fagiolini M."/>
            <person name="Faulkner G."/>
            <person name="Fletcher C.F."/>
            <person name="Fukushima T."/>
            <person name="Furuno M."/>
            <person name="Futaki S."/>
            <person name="Gariboldi M."/>
            <person name="Georgii-Hemming P."/>
            <person name="Gingeras T.R."/>
            <person name="Gojobori T."/>
            <person name="Green R.E."/>
            <person name="Gustincich S."/>
            <person name="Harbers M."/>
            <person name="Hayashi Y."/>
            <person name="Hensch T.K."/>
            <person name="Hirokawa N."/>
            <person name="Hill D."/>
            <person name="Huminiecki L."/>
            <person name="Iacono M."/>
            <person name="Ikeo K."/>
            <person name="Iwama A."/>
            <person name="Ishikawa T."/>
            <person name="Jakt M."/>
            <person name="Kanapin A."/>
            <person name="Katoh M."/>
            <person name="Kawasawa Y."/>
            <person name="Kelso J."/>
            <person name="Kitamura H."/>
            <person name="Kitano H."/>
            <person name="Kollias G."/>
            <person name="Krishnan S.P."/>
            <person name="Kruger A."/>
            <person name="Kummerfeld S.K."/>
            <person name="Kurochkin I.V."/>
            <person name="Lareau L.F."/>
            <person name="Lazarevic D."/>
            <person name="Lipovich L."/>
            <person name="Liu J."/>
            <person name="Liuni S."/>
            <person name="McWilliam S."/>
            <person name="Madan Babu M."/>
            <person name="Madera M."/>
            <person name="Marchionni L."/>
            <person name="Matsuda H."/>
            <person name="Matsuzawa S."/>
            <person name="Miki H."/>
            <person name="Mignone F."/>
            <person name="Miyake S."/>
            <person name="Morris K."/>
            <person name="Mottagui-Tabar S."/>
            <person name="Mulder N."/>
            <person name="Nakano N."/>
            <person name="Nakauchi H."/>
            <person name="Ng P."/>
            <person name="Nilsson R."/>
            <person name="Nishiguchi S."/>
            <person name="Nishikawa S."/>
            <person name="Nori F."/>
            <person name="Ohara O."/>
            <person name="Okazaki Y."/>
            <person name="Orlando V."/>
            <person name="Pang K.C."/>
            <person name="Pavan W.J."/>
            <person name="Pavesi G."/>
            <person name="Pesole G."/>
            <person name="Petrovsky N."/>
            <person name="Piazza S."/>
            <person name="Reed J."/>
            <person name="Reid J.F."/>
            <person name="Ring B.Z."/>
            <person name="Ringwald M."/>
            <person name="Rost B."/>
            <person name="Ruan Y."/>
            <person name="Salzberg S.L."/>
            <person name="Sandelin A."/>
            <person name="Schneider C."/>
            <person name="Schoenbach C."/>
            <person name="Sekiguchi K."/>
            <person name="Semple C.A."/>
            <person name="Seno S."/>
            <person name="Sessa L."/>
            <person name="Sheng Y."/>
            <person name="Shibata Y."/>
            <person name="Shimada H."/>
            <person name="Shimada K."/>
            <person name="Silva D."/>
            <person name="Sinclair B."/>
            <person name="Sperling S."/>
            <person name="Stupka E."/>
            <person name="Sugiura K."/>
            <person name="Sultana R."/>
            <person name="Takenaka Y."/>
            <person name="Taki K."/>
            <person name="Tammoja K."/>
            <person name="Tan S.L."/>
            <person name="Tang S."/>
            <person name="Taylor M.S."/>
            <person name="Tegner J."/>
            <person name="Teichmann S.A."/>
            <person name="Ueda H.R."/>
            <person name="van Nimwegen E."/>
            <person name="Verardo R."/>
            <person name="Wei C.L."/>
            <person name="Yagi K."/>
            <person name="Yamanishi H."/>
            <person name="Zabarovsky E."/>
            <person name="Zhu S."/>
            <person name="Zimmer A."/>
            <person name="Hide W."/>
            <person name="Bult C."/>
            <person name="Grimmond S.M."/>
            <person name="Teasdale R.D."/>
            <person name="Liu E.T."/>
            <person name="Brusic V."/>
            <person name="Quackenbush J."/>
            <person name="Wahlestedt C."/>
            <person name="Mattick J.S."/>
            <person name="Hume D.A."/>
            <person name="Kai C."/>
            <person name="Sasaki D."/>
            <person name="Tomaru Y."/>
            <person name="Fukuda S."/>
            <person name="Kanamori-Katayama M."/>
            <person name="Suzuki M."/>
            <person name="Aoki J."/>
            <person name="Arakawa T."/>
            <person name="Iida J."/>
            <person name="Imamura K."/>
            <person name="Itoh M."/>
            <person name="Kato T."/>
            <person name="Kawaji H."/>
            <person name="Kawagashira N."/>
            <person name="Kawashima T."/>
            <person name="Kojima M."/>
            <person name="Kondo S."/>
            <person name="Konno H."/>
            <person name="Nakano K."/>
            <person name="Ninomiya N."/>
            <person name="Nishio T."/>
            <person name="Okada M."/>
            <person name="Plessy C."/>
            <person name="Shibata K."/>
            <person name="Shiraki T."/>
            <person name="Suzuki S."/>
            <person name="Tagami M."/>
            <person name="Waki K."/>
            <person name="Watahiki A."/>
            <person name="Okamura-Oho Y."/>
            <person name="Suzuki H."/>
            <person name="Kawai J."/>
            <person name="Hayashizaki Y."/>
        </authorList>
    </citation>
    <scope>NUCLEOTIDE SEQUENCE [LARGE SCALE MRNA]</scope>
    <source>
        <strain>C57BL/6J</strain>
        <tissue>Head</tissue>
        <tissue>Lung</tissue>
        <tissue>Thymus</tissue>
    </source>
</reference>
<reference key="2">
    <citation type="journal article" date="2009" name="PLoS Biol.">
        <title>Lineage-specific biology revealed by a finished genome assembly of the mouse.</title>
        <authorList>
            <person name="Church D.M."/>
            <person name="Goodstadt L."/>
            <person name="Hillier L.W."/>
            <person name="Zody M.C."/>
            <person name="Goldstein S."/>
            <person name="She X."/>
            <person name="Bult C.J."/>
            <person name="Agarwala R."/>
            <person name="Cherry J.L."/>
            <person name="DiCuccio M."/>
            <person name="Hlavina W."/>
            <person name="Kapustin Y."/>
            <person name="Meric P."/>
            <person name="Maglott D."/>
            <person name="Birtle Z."/>
            <person name="Marques A.C."/>
            <person name="Graves T."/>
            <person name="Zhou S."/>
            <person name="Teague B."/>
            <person name="Potamousis K."/>
            <person name="Churas C."/>
            <person name="Place M."/>
            <person name="Herschleb J."/>
            <person name="Runnheim R."/>
            <person name="Forrest D."/>
            <person name="Amos-Landgraf J."/>
            <person name="Schwartz D.C."/>
            <person name="Cheng Z."/>
            <person name="Lindblad-Toh K."/>
            <person name="Eichler E.E."/>
            <person name="Ponting C.P."/>
        </authorList>
    </citation>
    <scope>NUCLEOTIDE SEQUENCE [LARGE SCALE GENOMIC DNA]</scope>
    <source>
        <strain>C57BL/6J</strain>
    </source>
</reference>
<reference key="3">
    <citation type="journal article" date="2004" name="Genome Res.">
        <title>The status, quality, and expansion of the NIH full-length cDNA project: the Mammalian Gene Collection (MGC).</title>
        <authorList>
            <consortium name="The MGC Project Team"/>
        </authorList>
    </citation>
    <scope>NUCLEOTIDE SEQUENCE [LARGE SCALE MRNA]</scope>
    <source>
        <strain>C57BL/6J</strain>
        <tissue>Embryo</tissue>
    </source>
</reference>
<reference key="4">
    <citation type="journal article" date="2010" name="Cell">
        <title>A tissue-specific atlas of mouse protein phosphorylation and expression.</title>
        <authorList>
            <person name="Huttlin E.L."/>
            <person name="Jedrychowski M.P."/>
            <person name="Elias J.E."/>
            <person name="Goswami T."/>
            <person name="Rad R."/>
            <person name="Beausoleil S.A."/>
            <person name="Villen J."/>
            <person name="Haas W."/>
            <person name="Sowa M.E."/>
            <person name="Gygi S.P."/>
        </authorList>
    </citation>
    <scope>IDENTIFICATION BY MASS SPECTROMETRY [LARGE SCALE ANALYSIS]</scope>
    <source>
        <tissue>Spleen</tissue>
        <tissue>Testis</tissue>
    </source>
</reference>
<reference key="5">
    <citation type="journal article" date="2017" name="PLoS Genet.">
        <title>Human mutations in integrator complex subunits link transcriptome integrity to brain development.</title>
        <authorList>
            <person name="Oegema R."/>
            <person name="Baillat D."/>
            <person name="Schot R."/>
            <person name="van Unen L.M."/>
            <person name="Brooks A."/>
            <person name="Kia S.K."/>
            <person name="Hoogeboom A.J.M."/>
            <person name="Xia Z."/>
            <person name="Li W."/>
            <person name="Cesaroni M."/>
            <person name="Lequin M.H."/>
            <person name="van Slegtenhorst M."/>
            <person name="Dobyns W.B."/>
            <person name="de Coo I.F.M."/>
            <person name="Verheijen F.W."/>
            <person name="Kremer A."/>
            <person name="van der Spek P.J."/>
            <person name="Heijsman D."/>
            <person name="Wagner E.J."/>
            <person name="Fornerod M."/>
            <person name="Mancini G.M.S."/>
        </authorList>
    </citation>
    <scope>DEVELOPMENTAL STAGE</scope>
</reference>